<protein>
    <recommendedName>
        <fullName>Triosephosphate isomerase, cytosolic</fullName>
        <shortName>TIM</shortName>
        <shortName>Triose-phosphate isomerase</shortName>
        <ecNumber>5.3.1.1</ecNumber>
    </recommendedName>
</protein>
<dbReference type="EC" id="5.3.1.1"/>
<dbReference type="EMBL" id="M87064">
    <property type="protein sequence ID" value="AAA18541.1"/>
    <property type="molecule type" value="mRNA"/>
</dbReference>
<dbReference type="EMBL" id="L04967">
    <property type="protein sequence ID" value="AAB63603.1"/>
    <property type="status" value="ALT_FRAME"/>
    <property type="molecule type" value="Genomic_DNA"/>
</dbReference>
<dbReference type="EMBL" id="AP002540">
    <property type="protein sequence ID" value="BAB43989.1"/>
    <property type="molecule type" value="Genomic_DNA"/>
</dbReference>
<dbReference type="EMBL" id="AP002872">
    <property type="protein sequence ID" value="BAB21144.1"/>
    <property type="molecule type" value="Genomic_DNA"/>
</dbReference>
<dbReference type="EMBL" id="AP008207">
    <property type="protein sequence ID" value="BAF03930.1"/>
    <property type="molecule type" value="Genomic_DNA"/>
</dbReference>
<dbReference type="EMBL" id="AP014957">
    <property type="protein sequence ID" value="BAS70389.1"/>
    <property type="molecule type" value="Genomic_DNA"/>
</dbReference>
<dbReference type="EMBL" id="CM000138">
    <property type="protein sequence ID" value="EAZ10535.1"/>
    <property type="molecule type" value="Genomic_DNA"/>
</dbReference>
<dbReference type="EMBL" id="AK060920">
    <property type="protein sequence ID" value="BAG87619.1"/>
    <property type="molecule type" value="mRNA"/>
</dbReference>
<dbReference type="PIR" id="JQ2255">
    <property type="entry name" value="JQ2255"/>
</dbReference>
<dbReference type="RefSeq" id="XP_015621507.1">
    <property type="nucleotide sequence ID" value="XM_015766021.1"/>
</dbReference>
<dbReference type="SMR" id="P48494"/>
<dbReference type="FunCoup" id="P48494">
    <property type="interactions" value="2199"/>
</dbReference>
<dbReference type="STRING" id="39947.P48494"/>
<dbReference type="PaxDb" id="39947-P48494"/>
<dbReference type="EnsemblPlants" id="Os01t0147900-01">
    <property type="protein sequence ID" value="Os01t0147900-01"/>
    <property type="gene ID" value="Os01g0147900"/>
</dbReference>
<dbReference type="Gramene" id="Os01t0147900-01">
    <property type="protein sequence ID" value="Os01t0147900-01"/>
    <property type="gene ID" value="Os01g0147900"/>
</dbReference>
<dbReference type="KEGG" id="dosa:Os01g0147900"/>
<dbReference type="eggNOG" id="KOG1643">
    <property type="taxonomic scope" value="Eukaryota"/>
</dbReference>
<dbReference type="HOGENOM" id="CLU_024251_2_0_1"/>
<dbReference type="InParanoid" id="P48494"/>
<dbReference type="OMA" id="MHWADAG"/>
<dbReference type="OrthoDB" id="6715177at2759"/>
<dbReference type="SABIO-RK" id="P48494"/>
<dbReference type="UniPathway" id="UPA00109">
    <property type="reaction ID" value="UER00189"/>
</dbReference>
<dbReference type="UniPathway" id="UPA00138"/>
<dbReference type="Proteomes" id="UP000000763">
    <property type="component" value="Chromosome 1"/>
</dbReference>
<dbReference type="Proteomes" id="UP000007752">
    <property type="component" value="Chromosome 1"/>
</dbReference>
<dbReference type="Proteomes" id="UP000059680">
    <property type="component" value="Chromosome 1"/>
</dbReference>
<dbReference type="GO" id="GO:0005829">
    <property type="term" value="C:cytosol"/>
    <property type="evidence" value="ECO:0000318"/>
    <property type="project" value="GO_Central"/>
</dbReference>
<dbReference type="GO" id="GO:0004807">
    <property type="term" value="F:triose-phosphate isomerase activity"/>
    <property type="evidence" value="ECO:0000318"/>
    <property type="project" value="GO_Central"/>
</dbReference>
<dbReference type="GO" id="GO:0006094">
    <property type="term" value="P:gluconeogenesis"/>
    <property type="evidence" value="ECO:0000318"/>
    <property type="project" value="GO_Central"/>
</dbReference>
<dbReference type="GO" id="GO:0046166">
    <property type="term" value="P:glyceraldehyde-3-phosphate biosynthetic process"/>
    <property type="evidence" value="ECO:0000318"/>
    <property type="project" value="GO_Central"/>
</dbReference>
<dbReference type="GO" id="GO:0019563">
    <property type="term" value="P:glycerol catabolic process"/>
    <property type="evidence" value="ECO:0000318"/>
    <property type="project" value="GO_Central"/>
</dbReference>
<dbReference type="GO" id="GO:0006096">
    <property type="term" value="P:glycolytic process"/>
    <property type="evidence" value="ECO:0000318"/>
    <property type="project" value="GO_Central"/>
</dbReference>
<dbReference type="CDD" id="cd00311">
    <property type="entry name" value="TIM"/>
    <property type="match status" value="1"/>
</dbReference>
<dbReference type="FunFam" id="3.20.20.70:FF:000025">
    <property type="entry name" value="Triosephosphate isomerase"/>
    <property type="match status" value="1"/>
</dbReference>
<dbReference type="Gene3D" id="3.20.20.70">
    <property type="entry name" value="Aldolase class I"/>
    <property type="match status" value="1"/>
</dbReference>
<dbReference type="HAMAP" id="MF_00147_B">
    <property type="entry name" value="TIM_B"/>
    <property type="match status" value="1"/>
</dbReference>
<dbReference type="InterPro" id="IPR013785">
    <property type="entry name" value="Aldolase_TIM"/>
</dbReference>
<dbReference type="InterPro" id="IPR035990">
    <property type="entry name" value="TIM_sf"/>
</dbReference>
<dbReference type="InterPro" id="IPR022896">
    <property type="entry name" value="TrioseP_Isoase_bac/euk"/>
</dbReference>
<dbReference type="InterPro" id="IPR000652">
    <property type="entry name" value="Triosephosphate_isomerase"/>
</dbReference>
<dbReference type="InterPro" id="IPR020861">
    <property type="entry name" value="Triosephosphate_isomerase_AS"/>
</dbReference>
<dbReference type="NCBIfam" id="TIGR00419">
    <property type="entry name" value="tim"/>
    <property type="match status" value="1"/>
</dbReference>
<dbReference type="PANTHER" id="PTHR21139">
    <property type="entry name" value="TRIOSEPHOSPHATE ISOMERASE"/>
    <property type="match status" value="1"/>
</dbReference>
<dbReference type="PANTHER" id="PTHR21139:SF34">
    <property type="entry name" value="TRIOSEPHOSPHATE ISOMERASE, CYTOSOLIC"/>
    <property type="match status" value="1"/>
</dbReference>
<dbReference type="Pfam" id="PF00121">
    <property type="entry name" value="TIM"/>
    <property type="match status" value="1"/>
</dbReference>
<dbReference type="SUPFAM" id="SSF51351">
    <property type="entry name" value="Triosephosphate isomerase (TIM)"/>
    <property type="match status" value="1"/>
</dbReference>
<dbReference type="PROSITE" id="PS00171">
    <property type="entry name" value="TIM_1"/>
    <property type="match status" value="1"/>
</dbReference>
<dbReference type="PROSITE" id="PS51440">
    <property type="entry name" value="TIM_2"/>
    <property type="match status" value="1"/>
</dbReference>
<accession>P48494</accession>
<accession>Q0JQP8</accession>
<accession>Q7F7B3</accession>
<name>TPIS_ORYSJ</name>
<proteinExistence type="evidence at protein level"/>
<evidence type="ECO:0000250" key="1"/>
<evidence type="ECO:0000269" key="2">
    <source>
    </source>
</evidence>
<evidence type="ECO:0000305" key="3"/>
<evidence type="ECO:0000312" key="4">
    <source>
        <dbReference type="EMBL" id="EAZ10535.1"/>
    </source>
</evidence>
<reference key="1">
    <citation type="journal article" date="1993" name="Plant Physiol.">
        <title>Cytosolic triosephosphate isomerase is a single gene in rice.</title>
        <authorList>
            <person name="Xu Y."/>
            <person name="Hall T.C."/>
        </authorList>
    </citation>
    <scope>NUCLEOTIDE SEQUENCE [MRNA]</scope>
    <source>
        <strain>cv. Lemont</strain>
        <tissue>Root</tissue>
    </source>
</reference>
<reference key="2">
    <citation type="journal article" date="1993" name="Plant Physiol.">
        <title>Nuclear gene encoding cytosolic triosephosphate isomerase from rice (Oryza sativa L.).</title>
        <authorList>
            <person name="Xu Y."/>
            <person name="Harris-Haller L.W."/>
            <person name="McCollum J.C."/>
            <person name="Hardin S.H."/>
            <person name="Hall T.C."/>
        </authorList>
    </citation>
    <scope>NUCLEOTIDE SEQUENCE [GENOMIC DNA]</scope>
    <source>
        <strain>cv. Gulfmont</strain>
        <tissue>Leaf</tissue>
    </source>
</reference>
<reference key="3">
    <citation type="journal article" date="2002" name="Nature">
        <title>The genome sequence and structure of rice chromosome 1.</title>
        <authorList>
            <person name="Sasaki T."/>
            <person name="Matsumoto T."/>
            <person name="Yamamoto K."/>
            <person name="Sakata K."/>
            <person name="Baba T."/>
            <person name="Katayose Y."/>
            <person name="Wu J."/>
            <person name="Niimura Y."/>
            <person name="Cheng Z."/>
            <person name="Nagamura Y."/>
            <person name="Antonio B.A."/>
            <person name="Kanamori H."/>
            <person name="Hosokawa S."/>
            <person name="Masukawa M."/>
            <person name="Arikawa K."/>
            <person name="Chiden Y."/>
            <person name="Hayashi M."/>
            <person name="Okamoto M."/>
            <person name="Ando T."/>
            <person name="Aoki H."/>
            <person name="Arita K."/>
            <person name="Hamada M."/>
            <person name="Harada C."/>
            <person name="Hijishita S."/>
            <person name="Honda M."/>
            <person name="Ichikawa Y."/>
            <person name="Idonuma A."/>
            <person name="Iijima M."/>
            <person name="Ikeda M."/>
            <person name="Ikeno M."/>
            <person name="Ito S."/>
            <person name="Ito T."/>
            <person name="Ito Y."/>
            <person name="Ito Y."/>
            <person name="Iwabuchi A."/>
            <person name="Kamiya K."/>
            <person name="Karasawa W."/>
            <person name="Katagiri S."/>
            <person name="Kikuta A."/>
            <person name="Kobayashi N."/>
            <person name="Kono I."/>
            <person name="Machita K."/>
            <person name="Maehara T."/>
            <person name="Mizuno H."/>
            <person name="Mizubayashi T."/>
            <person name="Mukai Y."/>
            <person name="Nagasaki H."/>
            <person name="Nakashima M."/>
            <person name="Nakama Y."/>
            <person name="Nakamichi Y."/>
            <person name="Nakamura M."/>
            <person name="Namiki N."/>
            <person name="Negishi M."/>
            <person name="Ohta I."/>
            <person name="Ono N."/>
            <person name="Saji S."/>
            <person name="Sakai K."/>
            <person name="Shibata M."/>
            <person name="Shimokawa T."/>
            <person name="Shomura A."/>
            <person name="Song J."/>
            <person name="Takazaki Y."/>
            <person name="Terasawa K."/>
            <person name="Tsuji K."/>
            <person name="Waki K."/>
            <person name="Yamagata H."/>
            <person name="Yamane H."/>
            <person name="Yoshiki S."/>
            <person name="Yoshihara R."/>
            <person name="Yukawa K."/>
            <person name="Zhong H."/>
            <person name="Iwama H."/>
            <person name="Endo T."/>
            <person name="Ito H."/>
            <person name="Hahn J.H."/>
            <person name="Kim H.-I."/>
            <person name="Eun M.-Y."/>
            <person name="Yano M."/>
            <person name="Jiang J."/>
            <person name="Gojobori T."/>
        </authorList>
    </citation>
    <scope>NUCLEOTIDE SEQUENCE [LARGE SCALE GENOMIC DNA]</scope>
    <source>
        <strain>cv. Nipponbare</strain>
    </source>
</reference>
<reference key="4">
    <citation type="journal article" date="2005" name="Nature">
        <title>The map-based sequence of the rice genome.</title>
        <authorList>
            <consortium name="International rice genome sequencing project (IRGSP)"/>
        </authorList>
    </citation>
    <scope>NUCLEOTIDE SEQUENCE [LARGE SCALE GENOMIC DNA]</scope>
    <source>
        <strain>cv. Nipponbare</strain>
    </source>
</reference>
<reference key="5">
    <citation type="journal article" date="2008" name="Nucleic Acids Res.">
        <title>The rice annotation project database (RAP-DB): 2008 update.</title>
        <authorList>
            <consortium name="The rice annotation project (RAP)"/>
        </authorList>
    </citation>
    <scope>GENOME REANNOTATION</scope>
    <source>
        <strain>cv. Nipponbare</strain>
    </source>
</reference>
<reference key="6">
    <citation type="journal article" date="2013" name="Rice">
        <title>Improvement of the Oryza sativa Nipponbare reference genome using next generation sequence and optical map data.</title>
        <authorList>
            <person name="Kawahara Y."/>
            <person name="de la Bastide M."/>
            <person name="Hamilton J.P."/>
            <person name="Kanamori H."/>
            <person name="McCombie W.R."/>
            <person name="Ouyang S."/>
            <person name="Schwartz D.C."/>
            <person name="Tanaka T."/>
            <person name="Wu J."/>
            <person name="Zhou S."/>
            <person name="Childs K.L."/>
            <person name="Davidson R.M."/>
            <person name="Lin H."/>
            <person name="Quesada-Ocampo L."/>
            <person name="Vaillancourt B."/>
            <person name="Sakai H."/>
            <person name="Lee S.S."/>
            <person name="Kim J."/>
            <person name="Numa H."/>
            <person name="Itoh T."/>
            <person name="Buell C.R."/>
            <person name="Matsumoto T."/>
        </authorList>
    </citation>
    <scope>GENOME REANNOTATION</scope>
    <source>
        <strain>cv. Nipponbare</strain>
    </source>
</reference>
<reference key="7">
    <citation type="journal article" date="2005" name="PLoS Biol.">
        <title>The genomes of Oryza sativa: a history of duplications.</title>
        <authorList>
            <person name="Yu J."/>
            <person name="Wang J."/>
            <person name="Lin W."/>
            <person name="Li S."/>
            <person name="Li H."/>
            <person name="Zhou J."/>
            <person name="Ni P."/>
            <person name="Dong W."/>
            <person name="Hu S."/>
            <person name="Zeng C."/>
            <person name="Zhang J."/>
            <person name="Zhang Y."/>
            <person name="Li R."/>
            <person name="Xu Z."/>
            <person name="Li S."/>
            <person name="Li X."/>
            <person name="Zheng H."/>
            <person name="Cong L."/>
            <person name="Lin L."/>
            <person name="Yin J."/>
            <person name="Geng J."/>
            <person name="Li G."/>
            <person name="Shi J."/>
            <person name="Liu J."/>
            <person name="Lv H."/>
            <person name="Li J."/>
            <person name="Wang J."/>
            <person name="Deng Y."/>
            <person name="Ran L."/>
            <person name="Shi X."/>
            <person name="Wang X."/>
            <person name="Wu Q."/>
            <person name="Li C."/>
            <person name="Ren X."/>
            <person name="Wang J."/>
            <person name="Wang X."/>
            <person name="Li D."/>
            <person name="Liu D."/>
            <person name="Zhang X."/>
            <person name="Ji Z."/>
            <person name="Zhao W."/>
            <person name="Sun Y."/>
            <person name="Zhang Z."/>
            <person name="Bao J."/>
            <person name="Han Y."/>
            <person name="Dong L."/>
            <person name="Ji J."/>
            <person name="Chen P."/>
            <person name="Wu S."/>
            <person name="Liu J."/>
            <person name="Xiao Y."/>
            <person name="Bu D."/>
            <person name="Tan J."/>
            <person name="Yang L."/>
            <person name="Ye C."/>
            <person name="Zhang J."/>
            <person name="Xu J."/>
            <person name="Zhou Y."/>
            <person name="Yu Y."/>
            <person name="Zhang B."/>
            <person name="Zhuang S."/>
            <person name="Wei H."/>
            <person name="Liu B."/>
            <person name="Lei M."/>
            <person name="Yu H."/>
            <person name="Li Y."/>
            <person name="Xu H."/>
            <person name="Wei S."/>
            <person name="He X."/>
            <person name="Fang L."/>
            <person name="Zhang Z."/>
            <person name="Zhang Y."/>
            <person name="Huang X."/>
            <person name="Su Z."/>
            <person name="Tong W."/>
            <person name="Li J."/>
            <person name="Tong Z."/>
            <person name="Li S."/>
            <person name="Ye J."/>
            <person name="Wang L."/>
            <person name="Fang L."/>
            <person name="Lei T."/>
            <person name="Chen C.-S."/>
            <person name="Chen H.-C."/>
            <person name="Xu Z."/>
            <person name="Li H."/>
            <person name="Huang H."/>
            <person name="Zhang F."/>
            <person name="Xu H."/>
            <person name="Li N."/>
            <person name="Zhao C."/>
            <person name="Li S."/>
            <person name="Dong L."/>
            <person name="Huang Y."/>
            <person name="Li L."/>
            <person name="Xi Y."/>
            <person name="Qi Q."/>
            <person name="Li W."/>
            <person name="Zhang B."/>
            <person name="Hu W."/>
            <person name="Zhang Y."/>
            <person name="Tian X."/>
            <person name="Jiao Y."/>
            <person name="Liang X."/>
            <person name="Jin J."/>
            <person name="Gao L."/>
            <person name="Zheng W."/>
            <person name="Hao B."/>
            <person name="Liu S.-M."/>
            <person name="Wang W."/>
            <person name="Yuan L."/>
            <person name="Cao M."/>
            <person name="McDermott J."/>
            <person name="Samudrala R."/>
            <person name="Wang J."/>
            <person name="Wong G.K.-S."/>
            <person name="Yang H."/>
        </authorList>
    </citation>
    <scope>NUCLEOTIDE SEQUENCE [LARGE SCALE GENOMIC DNA]</scope>
    <source>
        <strain>cv. Nipponbare</strain>
    </source>
</reference>
<reference key="8">
    <citation type="journal article" date="2003" name="Science">
        <title>Collection, mapping, and annotation of over 28,000 cDNA clones from japonica rice.</title>
        <authorList>
            <consortium name="The rice full-length cDNA consortium"/>
        </authorList>
    </citation>
    <scope>NUCLEOTIDE SEQUENCE [LARGE SCALE MRNA]</scope>
    <source>
        <strain>cv. Nipponbare</strain>
    </source>
</reference>
<reference key="9">
    <citation type="journal article" date="2004" name="Nucleic Acids Res.">
        <title>Rice proteome database based on two-dimensional polyacrylamide gel electrophoresis: its status in 2003.</title>
        <authorList>
            <person name="Komatsu S."/>
            <person name="Kojima K."/>
            <person name="Suzuki K."/>
            <person name="Ozaki K."/>
            <person name="Higo K."/>
        </authorList>
    </citation>
    <scope>PROTEIN SEQUENCE OF 2-11</scope>
    <source>
        <strain>cv. Nipponbare</strain>
        <tissue>Anther</tissue>
        <tissue>Embryo</tissue>
        <tissue>Stem</tissue>
    </source>
</reference>
<sequence length="253" mass="27063">MGRKFFVGGNWKCNGTTDQVDKIVKILNEGQIASTDVVEVVVSPPYVFLPVVKSQLRPEIQVAAQNCWVKKGGAFTGEVSAEMLVNLSIPWVILGHSERRSLLGESNEFVGDKVAYALSQGLKVIACVGETLEQRESGSTMDVVAAQTKAISERIKDWTNVVVAYEPVWAIGTGKVATPDQAQEVHDGLRKWLAANVSAEVAESTRIIYGGSVTGANCKELAAKPDVDGFLVGGASLKPEFIDIINSATVKSA</sequence>
<gene>
    <name type="primary">TPI</name>
    <name type="ordered locus">Os01g0147900</name>
    <name type="ordered locus">LOC_Os01g05490</name>
    <name evidence="4" type="ORF">OsJ_00367</name>
    <name type="ORF">P0416D03.45</name>
    <name type="ORF">P0434B04.9</name>
</gene>
<comment type="catalytic activity">
    <reaction>
        <text>D-glyceraldehyde 3-phosphate = dihydroxyacetone phosphate</text>
        <dbReference type="Rhea" id="RHEA:18585"/>
        <dbReference type="ChEBI" id="CHEBI:57642"/>
        <dbReference type="ChEBI" id="CHEBI:59776"/>
        <dbReference type="EC" id="5.3.1.1"/>
    </reaction>
</comment>
<comment type="pathway">
    <text>Carbohydrate biosynthesis; gluconeogenesis.</text>
</comment>
<comment type="pathway">
    <text>Carbohydrate degradation; glycolysis; D-glyceraldehyde 3-phosphate from glycerone phosphate: step 1/1.</text>
</comment>
<comment type="subunit">
    <text evidence="1">Homodimer.</text>
</comment>
<comment type="subcellular location">
    <subcellularLocation>
        <location evidence="3">Cytoplasm</location>
    </subcellularLocation>
</comment>
<comment type="miscellaneous">
    <text>In plants, there are two types of TPIS, cytosolic and plastid.</text>
</comment>
<comment type="similarity">
    <text evidence="3">Belongs to the triosephosphate isomerase family.</text>
</comment>
<comment type="sequence caution" evidence="3">
    <conflict type="frameshift">
        <sequence resource="EMBL-CDS" id="AAB63603"/>
    </conflict>
</comment>
<keyword id="KW-0963">Cytoplasm</keyword>
<keyword id="KW-0903">Direct protein sequencing</keyword>
<keyword id="KW-0312">Gluconeogenesis</keyword>
<keyword id="KW-0324">Glycolysis</keyword>
<keyword id="KW-0413">Isomerase</keyword>
<keyword id="KW-1185">Reference proteome</keyword>
<feature type="initiator methionine" description="Removed" evidence="2">
    <location>
        <position position="1"/>
    </location>
</feature>
<feature type="chain" id="PRO_0000090151" description="Triosephosphate isomerase, cytosolic">
    <location>
        <begin position="2"/>
        <end position="253"/>
    </location>
</feature>
<feature type="active site" description="Electrophile" evidence="1">
    <location>
        <position position="96"/>
    </location>
</feature>
<feature type="active site" description="Proton acceptor" evidence="1">
    <location>
        <position position="166"/>
    </location>
</feature>
<feature type="binding site" evidence="1">
    <location>
        <position position="10"/>
    </location>
    <ligand>
        <name>substrate</name>
    </ligand>
</feature>
<feature type="binding site" evidence="1">
    <location>
        <position position="12"/>
    </location>
    <ligand>
        <name>substrate</name>
    </ligand>
</feature>
<organism>
    <name type="scientific">Oryza sativa subsp. japonica</name>
    <name type="common">Rice</name>
    <dbReference type="NCBI Taxonomy" id="39947"/>
    <lineage>
        <taxon>Eukaryota</taxon>
        <taxon>Viridiplantae</taxon>
        <taxon>Streptophyta</taxon>
        <taxon>Embryophyta</taxon>
        <taxon>Tracheophyta</taxon>
        <taxon>Spermatophyta</taxon>
        <taxon>Magnoliopsida</taxon>
        <taxon>Liliopsida</taxon>
        <taxon>Poales</taxon>
        <taxon>Poaceae</taxon>
        <taxon>BOP clade</taxon>
        <taxon>Oryzoideae</taxon>
        <taxon>Oryzeae</taxon>
        <taxon>Oryzinae</taxon>
        <taxon>Oryza</taxon>
        <taxon>Oryza sativa</taxon>
    </lineage>
</organism>